<reference key="1">
    <citation type="journal article" date="2010" name="Genome Biol. Evol.">
        <title>Continuing evolution of Burkholderia mallei through genome reduction and large-scale rearrangements.</title>
        <authorList>
            <person name="Losada L."/>
            <person name="Ronning C.M."/>
            <person name="DeShazer D."/>
            <person name="Woods D."/>
            <person name="Fedorova N."/>
            <person name="Kim H.S."/>
            <person name="Shabalina S.A."/>
            <person name="Pearson T.R."/>
            <person name="Brinkac L."/>
            <person name="Tan P."/>
            <person name="Nandi T."/>
            <person name="Crabtree J."/>
            <person name="Badger J."/>
            <person name="Beckstrom-Sternberg S."/>
            <person name="Saqib M."/>
            <person name="Schutzer S.E."/>
            <person name="Keim P."/>
            <person name="Nierman W.C."/>
        </authorList>
    </citation>
    <scope>NUCLEOTIDE SEQUENCE [LARGE SCALE GENOMIC DNA]</scope>
    <source>
        <strain>1710b</strain>
    </source>
</reference>
<organism>
    <name type="scientific">Burkholderia pseudomallei (strain 1710b)</name>
    <dbReference type="NCBI Taxonomy" id="320372"/>
    <lineage>
        <taxon>Bacteria</taxon>
        <taxon>Pseudomonadati</taxon>
        <taxon>Pseudomonadota</taxon>
        <taxon>Betaproteobacteria</taxon>
        <taxon>Burkholderiales</taxon>
        <taxon>Burkholderiaceae</taxon>
        <taxon>Burkholderia</taxon>
        <taxon>pseudomallei group</taxon>
    </lineage>
</organism>
<sequence length="203" mass="21719">MFSVGLTGGIGSGKTTVADLFGKLGATIVDTDLIAHRITAPQGLAMPLIAREFGAEFVAADGSLDRAKMRALVFSDESARKRLEAITHPLIREETEREARTAQGAYVVFVVPLLVESGTWKTRVDRVLVVDCDVETQIARVTARNGFTRAQVEAIVARQASRDARLAAADDVIANDNASVAELAAEVAALHQRYLECAAAARN</sequence>
<evidence type="ECO:0000255" key="1">
    <source>
        <dbReference type="HAMAP-Rule" id="MF_00376"/>
    </source>
</evidence>
<protein>
    <recommendedName>
        <fullName evidence="1">Dephospho-CoA kinase</fullName>
        <ecNumber evidence="1">2.7.1.24</ecNumber>
    </recommendedName>
    <alternativeName>
        <fullName evidence="1">Dephosphocoenzyme A kinase</fullName>
    </alternativeName>
</protein>
<comment type="function">
    <text evidence="1">Catalyzes the phosphorylation of the 3'-hydroxyl group of dephosphocoenzyme A to form coenzyme A.</text>
</comment>
<comment type="catalytic activity">
    <reaction evidence="1">
        <text>3'-dephospho-CoA + ATP = ADP + CoA + H(+)</text>
        <dbReference type="Rhea" id="RHEA:18245"/>
        <dbReference type="ChEBI" id="CHEBI:15378"/>
        <dbReference type="ChEBI" id="CHEBI:30616"/>
        <dbReference type="ChEBI" id="CHEBI:57287"/>
        <dbReference type="ChEBI" id="CHEBI:57328"/>
        <dbReference type="ChEBI" id="CHEBI:456216"/>
        <dbReference type="EC" id="2.7.1.24"/>
    </reaction>
</comment>
<comment type="pathway">
    <text evidence="1">Cofactor biosynthesis; coenzyme A biosynthesis; CoA from (R)-pantothenate: step 5/5.</text>
</comment>
<comment type="subcellular location">
    <subcellularLocation>
        <location evidence="1">Cytoplasm</location>
    </subcellularLocation>
</comment>
<comment type="similarity">
    <text evidence="1">Belongs to the CoaE family.</text>
</comment>
<name>COAE_BURP1</name>
<accession>Q3JNF3</accession>
<dbReference type="EC" id="2.7.1.24" evidence="1"/>
<dbReference type="EMBL" id="CP000124">
    <property type="protein sequence ID" value="ABA47879.1"/>
    <property type="molecule type" value="Genomic_DNA"/>
</dbReference>
<dbReference type="RefSeq" id="WP_004194322.1">
    <property type="nucleotide sequence ID" value="NC_007434.1"/>
</dbReference>
<dbReference type="SMR" id="Q3JNF3"/>
<dbReference type="EnsemblBacteria" id="ABA47879">
    <property type="protein sequence ID" value="ABA47879"/>
    <property type="gene ID" value="BURPS1710b_3530"/>
</dbReference>
<dbReference type="GeneID" id="92980227"/>
<dbReference type="KEGG" id="bpm:BURPS1710b_3530"/>
<dbReference type="HOGENOM" id="CLU_057180_1_2_4"/>
<dbReference type="UniPathway" id="UPA00241">
    <property type="reaction ID" value="UER00356"/>
</dbReference>
<dbReference type="Proteomes" id="UP000002700">
    <property type="component" value="Chromosome I"/>
</dbReference>
<dbReference type="GO" id="GO:0005737">
    <property type="term" value="C:cytoplasm"/>
    <property type="evidence" value="ECO:0007669"/>
    <property type="project" value="UniProtKB-SubCell"/>
</dbReference>
<dbReference type="GO" id="GO:0005524">
    <property type="term" value="F:ATP binding"/>
    <property type="evidence" value="ECO:0007669"/>
    <property type="project" value="UniProtKB-UniRule"/>
</dbReference>
<dbReference type="GO" id="GO:0004140">
    <property type="term" value="F:dephospho-CoA kinase activity"/>
    <property type="evidence" value="ECO:0007669"/>
    <property type="project" value="UniProtKB-UniRule"/>
</dbReference>
<dbReference type="GO" id="GO:0015937">
    <property type="term" value="P:coenzyme A biosynthetic process"/>
    <property type="evidence" value="ECO:0007669"/>
    <property type="project" value="UniProtKB-UniRule"/>
</dbReference>
<dbReference type="CDD" id="cd02022">
    <property type="entry name" value="DPCK"/>
    <property type="match status" value="1"/>
</dbReference>
<dbReference type="Gene3D" id="3.40.50.300">
    <property type="entry name" value="P-loop containing nucleotide triphosphate hydrolases"/>
    <property type="match status" value="1"/>
</dbReference>
<dbReference type="HAMAP" id="MF_00376">
    <property type="entry name" value="Dephospho_CoA_kinase"/>
    <property type="match status" value="1"/>
</dbReference>
<dbReference type="InterPro" id="IPR001977">
    <property type="entry name" value="Depp_CoAkinase"/>
</dbReference>
<dbReference type="InterPro" id="IPR027417">
    <property type="entry name" value="P-loop_NTPase"/>
</dbReference>
<dbReference type="NCBIfam" id="TIGR00152">
    <property type="entry name" value="dephospho-CoA kinase"/>
    <property type="match status" value="1"/>
</dbReference>
<dbReference type="PANTHER" id="PTHR10695:SF46">
    <property type="entry name" value="BIFUNCTIONAL COENZYME A SYNTHASE-RELATED"/>
    <property type="match status" value="1"/>
</dbReference>
<dbReference type="PANTHER" id="PTHR10695">
    <property type="entry name" value="DEPHOSPHO-COA KINASE-RELATED"/>
    <property type="match status" value="1"/>
</dbReference>
<dbReference type="Pfam" id="PF01121">
    <property type="entry name" value="CoaE"/>
    <property type="match status" value="1"/>
</dbReference>
<dbReference type="SUPFAM" id="SSF52540">
    <property type="entry name" value="P-loop containing nucleoside triphosphate hydrolases"/>
    <property type="match status" value="1"/>
</dbReference>
<dbReference type="PROSITE" id="PS51219">
    <property type="entry name" value="DPCK"/>
    <property type="match status" value="1"/>
</dbReference>
<proteinExistence type="inferred from homology"/>
<feature type="chain" id="PRO_0000243268" description="Dephospho-CoA kinase">
    <location>
        <begin position="1"/>
        <end position="203"/>
    </location>
</feature>
<feature type="domain" description="DPCK" evidence="1">
    <location>
        <begin position="3"/>
        <end position="201"/>
    </location>
</feature>
<feature type="binding site" evidence="1">
    <location>
        <begin position="11"/>
        <end position="16"/>
    </location>
    <ligand>
        <name>ATP</name>
        <dbReference type="ChEBI" id="CHEBI:30616"/>
    </ligand>
</feature>
<keyword id="KW-0067">ATP-binding</keyword>
<keyword id="KW-0173">Coenzyme A biosynthesis</keyword>
<keyword id="KW-0963">Cytoplasm</keyword>
<keyword id="KW-0418">Kinase</keyword>
<keyword id="KW-0547">Nucleotide-binding</keyword>
<keyword id="KW-0808">Transferase</keyword>
<gene>
    <name evidence="1" type="primary">coaE</name>
    <name type="ordered locus">BURPS1710b_3530</name>
</gene>